<accession>Q927I5</accession>
<organism>
    <name type="scientific">Listeria innocua serovar 6a (strain ATCC BAA-680 / CLIP 11262)</name>
    <dbReference type="NCBI Taxonomy" id="272626"/>
    <lineage>
        <taxon>Bacteria</taxon>
        <taxon>Bacillati</taxon>
        <taxon>Bacillota</taxon>
        <taxon>Bacilli</taxon>
        <taxon>Bacillales</taxon>
        <taxon>Listeriaceae</taxon>
        <taxon>Listeria</taxon>
    </lineage>
</organism>
<proteinExistence type="inferred from homology"/>
<sequence length="695" mass="76822">MAREFSLEKTRNIGIMAHIDAGKTTTTERILFYTGRIHKIGETHEGASQMDWMEQEQERGITITSAATTAQWKGYRVNIIDTPGHVDFTVEVERSLRVLDGAVAVLDAQSGVEPQTETVWRQATTYGVPRVVFVNKMDKIGADFLYSVGTLHERLAANAHPIQLPIGAEDTFEGIIDLIEMNALYYEDDLGNDPHIKEIPADLKDLADEYRGKLVEAVAELDEELMMKYLEGEEITKEELKAGIRKGTLNVEFYPVVCGTAFKNKGVQPMLDAVLDYLPAPTDVPAINGVLPDGEEAARHADDSEPFSSLAFKVMTDPYVGRLTFFRVYSGTLNSGSYVQNSTKGKRERVGRILQMHANHREEISIVYAGDIAAAVGLKDTTTGDTLCDEKEQIILESMEFPEPVIQVAIEPKSKADQDKMGQALAKLAEEDPTFRAETDQETGQTLISGMGELHLDILVDRMKREFRVEANVGDPQVSYRETFRKSAQVEGKFVRQSGGRGQYGHVWIEFGPNEEGKGFEFENAIVGGVVPREYIPAVQAGLEGALDNGVLAGYPLIDIKAKLYDGSYHDVDSNEMAFKVAASMALRNAAKKCDPVILEPMMAVEVVIPEEYLGDIMGNITSRRGRVDGMEARGNAQVVRAFVPLANMFGYATHLRSGTQGRGVYTMQFDHYEEVPKSIAEEIIKANGGNNKED</sequence>
<dbReference type="EMBL" id="AL596173">
    <property type="protein sequence ID" value="CAC98029.1"/>
    <property type="molecule type" value="Genomic_DNA"/>
</dbReference>
<dbReference type="PIR" id="AE1782">
    <property type="entry name" value="AE1782"/>
</dbReference>
<dbReference type="RefSeq" id="WP_003772905.1">
    <property type="nucleotide sequence ID" value="NC_003212.1"/>
</dbReference>
<dbReference type="SMR" id="Q927I5"/>
<dbReference type="STRING" id="272626.gene:17567190"/>
<dbReference type="GeneID" id="93236076"/>
<dbReference type="KEGG" id="lin:fus"/>
<dbReference type="eggNOG" id="COG0480">
    <property type="taxonomic scope" value="Bacteria"/>
</dbReference>
<dbReference type="HOGENOM" id="CLU_002794_4_1_9"/>
<dbReference type="OrthoDB" id="9804431at2"/>
<dbReference type="Proteomes" id="UP000002513">
    <property type="component" value="Chromosome"/>
</dbReference>
<dbReference type="GO" id="GO:0005737">
    <property type="term" value="C:cytoplasm"/>
    <property type="evidence" value="ECO:0007669"/>
    <property type="project" value="UniProtKB-SubCell"/>
</dbReference>
<dbReference type="GO" id="GO:0005525">
    <property type="term" value="F:GTP binding"/>
    <property type="evidence" value="ECO:0007669"/>
    <property type="project" value="UniProtKB-UniRule"/>
</dbReference>
<dbReference type="GO" id="GO:0003924">
    <property type="term" value="F:GTPase activity"/>
    <property type="evidence" value="ECO:0007669"/>
    <property type="project" value="InterPro"/>
</dbReference>
<dbReference type="GO" id="GO:0003746">
    <property type="term" value="F:translation elongation factor activity"/>
    <property type="evidence" value="ECO:0007669"/>
    <property type="project" value="UniProtKB-UniRule"/>
</dbReference>
<dbReference type="GO" id="GO:0032790">
    <property type="term" value="P:ribosome disassembly"/>
    <property type="evidence" value="ECO:0007669"/>
    <property type="project" value="TreeGrafter"/>
</dbReference>
<dbReference type="CDD" id="cd01886">
    <property type="entry name" value="EF-G"/>
    <property type="match status" value="1"/>
</dbReference>
<dbReference type="CDD" id="cd16262">
    <property type="entry name" value="EFG_III"/>
    <property type="match status" value="1"/>
</dbReference>
<dbReference type="CDD" id="cd01434">
    <property type="entry name" value="EFG_mtEFG1_IV"/>
    <property type="match status" value="1"/>
</dbReference>
<dbReference type="CDD" id="cd03713">
    <property type="entry name" value="EFG_mtEFG_C"/>
    <property type="match status" value="1"/>
</dbReference>
<dbReference type="CDD" id="cd04088">
    <property type="entry name" value="EFG_mtEFG_II"/>
    <property type="match status" value="1"/>
</dbReference>
<dbReference type="FunFam" id="2.40.30.10:FF:000006">
    <property type="entry name" value="Elongation factor G"/>
    <property type="match status" value="1"/>
</dbReference>
<dbReference type="FunFam" id="3.30.230.10:FF:000003">
    <property type="entry name" value="Elongation factor G"/>
    <property type="match status" value="1"/>
</dbReference>
<dbReference type="FunFam" id="3.30.70.240:FF:000001">
    <property type="entry name" value="Elongation factor G"/>
    <property type="match status" value="1"/>
</dbReference>
<dbReference type="FunFam" id="3.30.70.870:FF:000001">
    <property type="entry name" value="Elongation factor G"/>
    <property type="match status" value="1"/>
</dbReference>
<dbReference type="FunFam" id="3.40.50.300:FF:000029">
    <property type="entry name" value="Elongation factor G"/>
    <property type="match status" value="1"/>
</dbReference>
<dbReference type="Gene3D" id="3.30.230.10">
    <property type="match status" value="1"/>
</dbReference>
<dbReference type="Gene3D" id="3.30.70.240">
    <property type="match status" value="1"/>
</dbReference>
<dbReference type="Gene3D" id="3.30.70.870">
    <property type="entry name" value="Elongation Factor G (Translational Gtpase), domain 3"/>
    <property type="match status" value="1"/>
</dbReference>
<dbReference type="Gene3D" id="3.40.50.300">
    <property type="entry name" value="P-loop containing nucleotide triphosphate hydrolases"/>
    <property type="match status" value="1"/>
</dbReference>
<dbReference type="Gene3D" id="2.40.30.10">
    <property type="entry name" value="Translation factors"/>
    <property type="match status" value="1"/>
</dbReference>
<dbReference type="HAMAP" id="MF_00054_B">
    <property type="entry name" value="EF_G_EF_2_B"/>
    <property type="match status" value="1"/>
</dbReference>
<dbReference type="InterPro" id="IPR041095">
    <property type="entry name" value="EFG_II"/>
</dbReference>
<dbReference type="InterPro" id="IPR009022">
    <property type="entry name" value="EFG_III"/>
</dbReference>
<dbReference type="InterPro" id="IPR035647">
    <property type="entry name" value="EFG_III/V"/>
</dbReference>
<dbReference type="InterPro" id="IPR047872">
    <property type="entry name" value="EFG_IV"/>
</dbReference>
<dbReference type="InterPro" id="IPR035649">
    <property type="entry name" value="EFG_V"/>
</dbReference>
<dbReference type="InterPro" id="IPR000640">
    <property type="entry name" value="EFG_V-like"/>
</dbReference>
<dbReference type="InterPro" id="IPR004161">
    <property type="entry name" value="EFTu-like_2"/>
</dbReference>
<dbReference type="InterPro" id="IPR031157">
    <property type="entry name" value="G_TR_CS"/>
</dbReference>
<dbReference type="InterPro" id="IPR027417">
    <property type="entry name" value="P-loop_NTPase"/>
</dbReference>
<dbReference type="InterPro" id="IPR020568">
    <property type="entry name" value="Ribosomal_Su5_D2-typ_SF"/>
</dbReference>
<dbReference type="InterPro" id="IPR014721">
    <property type="entry name" value="Ribsml_uS5_D2-typ_fold_subgr"/>
</dbReference>
<dbReference type="InterPro" id="IPR005225">
    <property type="entry name" value="Small_GTP-bd"/>
</dbReference>
<dbReference type="InterPro" id="IPR000795">
    <property type="entry name" value="T_Tr_GTP-bd_dom"/>
</dbReference>
<dbReference type="InterPro" id="IPR009000">
    <property type="entry name" value="Transl_B-barrel_sf"/>
</dbReference>
<dbReference type="InterPro" id="IPR004540">
    <property type="entry name" value="Transl_elong_EFG/EF2"/>
</dbReference>
<dbReference type="InterPro" id="IPR005517">
    <property type="entry name" value="Transl_elong_EFG/EF2_IV"/>
</dbReference>
<dbReference type="NCBIfam" id="TIGR00484">
    <property type="entry name" value="EF-G"/>
    <property type="match status" value="1"/>
</dbReference>
<dbReference type="NCBIfam" id="NF009379">
    <property type="entry name" value="PRK12740.1-3"/>
    <property type="match status" value="1"/>
</dbReference>
<dbReference type="NCBIfam" id="NF009381">
    <property type="entry name" value="PRK12740.1-5"/>
    <property type="match status" value="1"/>
</dbReference>
<dbReference type="NCBIfam" id="TIGR00231">
    <property type="entry name" value="small_GTP"/>
    <property type="match status" value="1"/>
</dbReference>
<dbReference type="PANTHER" id="PTHR43261:SF1">
    <property type="entry name" value="RIBOSOME-RELEASING FACTOR 2, MITOCHONDRIAL"/>
    <property type="match status" value="1"/>
</dbReference>
<dbReference type="PANTHER" id="PTHR43261">
    <property type="entry name" value="TRANSLATION ELONGATION FACTOR G-RELATED"/>
    <property type="match status" value="1"/>
</dbReference>
<dbReference type="Pfam" id="PF00679">
    <property type="entry name" value="EFG_C"/>
    <property type="match status" value="1"/>
</dbReference>
<dbReference type="Pfam" id="PF14492">
    <property type="entry name" value="EFG_III"/>
    <property type="match status" value="1"/>
</dbReference>
<dbReference type="Pfam" id="PF03764">
    <property type="entry name" value="EFG_IV"/>
    <property type="match status" value="1"/>
</dbReference>
<dbReference type="Pfam" id="PF00009">
    <property type="entry name" value="GTP_EFTU"/>
    <property type="match status" value="1"/>
</dbReference>
<dbReference type="Pfam" id="PF03144">
    <property type="entry name" value="GTP_EFTU_D2"/>
    <property type="match status" value="1"/>
</dbReference>
<dbReference type="PRINTS" id="PR00315">
    <property type="entry name" value="ELONGATNFCT"/>
</dbReference>
<dbReference type="SMART" id="SM00838">
    <property type="entry name" value="EFG_C"/>
    <property type="match status" value="1"/>
</dbReference>
<dbReference type="SMART" id="SM00889">
    <property type="entry name" value="EFG_IV"/>
    <property type="match status" value="1"/>
</dbReference>
<dbReference type="SUPFAM" id="SSF54980">
    <property type="entry name" value="EF-G C-terminal domain-like"/>
    <property type="match status" value="2"/>
</dbReference>
<dbReference type="SUPFAM" id="SSF52540">
    <property type="entry name" value="P-loop containing nucleoside triphosphate hydrolases"/>
    <property type="match status" value="1"/>
</dbReference>
<dbReference type="SUPFAM" id="SSF54211">
    <property type="entry name" value="Ribosomal protein S5 domain 2-like"/>
    <property type="match status" value="1"/>
</dbReference>
<dbReference type="SUPFAM" id="SSF50447">
    <property type="entry name" value="Translation proteins"/>
    <property type="match status" value="1"/>
</dbReference>
<dbReference type="PROSITE" id="PS00301">
    <property type="entry name" value="G_TR_1"/>
    <property type="match status" value="1"/>
</dbReference>
<dbReference type="PROSITE" id="PS51722">
    <property type="entry name" value="G_TR_2"/>
    <property type="match status" value="1"/>
</dbReference>
<keyword id="KW-0963">Cytoplasm</keyword>
<keyword id="KW-0251">Elongation factor</keyword>
<keyword id="KW-0342">GTP-binding</keyword>
<keyword id="KW-0547">Nucleotide-binding</keyword>
<keyword id="KW-0648">Protein biosynthesis</keyword>
<evidence type="ECO:0000255" key="1">
    <source>
        <dbReference type="HAMAP-Rule" id="MF_00054"/>
    </source>
</evidence>
<protein>
    <recommendedName>
        <fullName evidence="1">Elongation factor G</fullName>
        <shortName evidence="1">EF-G</shortName>
    </recommendedName>
</protein>
<gene>
    <name evidence="1" type="primary">fusA</name>
    <name type="synonym">fus</name>
    <name type="ordered locus">lin2803</name>
</gene>
<comment type="function">
    <text evidence="1">Catalyzes the GTP-dependent ribosomal translocation step during translation elongation. During this step, the ribosome changes from the pre-translocational (PRE) to the post-translocational (POST) state as the newly formed A-site-bound peptidyl-tRNA and P-site-bound deacylated tRNA move to the P and E sites, respectively. Catalyzes the coordinated movement of the two tRNA molecules, the mRNA and conformational changes in the ribosome.</text>
</comment>
<comment type="subcellular location">
    <subcellularLocation>
        <location evidence="1">Cytoplasm</location>
    </subcellularLocation>
</comment>
<comment type="similarity">
    <text evidence="1">Belongs to the TRAFAC class translation factor GTPase superfamily. Classic translation factor GTPase family. EF-G/EF-2 subfamily.</text>
</comment>
<name>EFG_LISIN</name>
<feature type="chain" id="PRO_0000091146" description="Elongation factor G">
    <location>
        <begin position="1"/>
        <end position="695"/>
    </location>
</feature>
<feature type="domain" description="tr-type G">
    <location>
        <begin position="8"/>
        <end position="282"/>
    </location>
</feature>
<feature type="binding site" evidence="1">
    <location>
        <begin position="17"/>
        <end position="24"/>
    </location>
    <ligand>
        <name>GTP</name>
        <dbReference type="ChEBI" id="CHEBI:37565"/>
    </ligand>
</feature>
<feature type="binding site" evidence="1">
    <location>
        <begin position="81"/>
        <end position="85"/>
    </location>
    <ligand>
        <name>GTP</name>
        <dbReference type="ChEBI" id="CHEBI:37565"/>
    </ligand>
</feature>
<feature type="binding site" evidence="1">
    <location>
        <begin position="135"/>
        <end position="138"/>
    </location>
    <ligand>
        <name>GTP</name>
        <dbReference type="ChEBI" id="CHEBI:37565"/>
    </ligand>
</feature>
<reference key="1">
    <citation type="journal article" date="2001" name="Science">
        <title>Comparative genomics of Listeria species.</title>
        <authorList>
            <person name="Glaser P."/>
            <person name="Frangeul L."/>
            <person name="Buchrieser C."/>
            <person name="Rusniok C."/>
            <person name="Amend A."/>
            <person name="Baquero F."/>
            <person name="Berche P."/>
            <person name="Bloecker H."/>
            <person name="Brandt P."/>
            <person name="Chakraborty T."/>
            <person name="Charbit A."/>
            <person name="Chetouani F."/>
            <person name="Couve E."/>
            <person name="de Daruvar A."/>
            <person name="Dehoux P."/>
            <person name="Domann E."/>
            <person name="Dominguez-Bernal G."/>
            <person name="Duchaud E."/>
            <person name="Durant L."/>
            <person name="Dussurget O."/>
            <person name="Entian K.-D."/>
            <person name="Fsihi H."/>
            <person name="Garcia-del Portillo F."/>
            <person name="Garrido P."/>
            <person name="Gautier L."/>
            <person name="Goebel W."/>
            <person name="Gomez-Lopez N."/>
            <person name="Hain T."/>
            <person name="Hauf J."/>
            <person name="Jackson D."/>
            <person name="Jones L.-M."/>
            <person name="Kaerst U."/>
            <person name="Kreft J."/>
            <person name="Kuhn M."/>
            <person name="Kunst F."/>
            <person name="Kurapkat G."/>
            <person name="Madueno E."/>
            <person name="Maitournam A."/>
            <person name="Mata Vicente J."/>
            <person name="Ng E."/>
            <person name="Nedjari H."/>
            <person name="Nordsiek G."/>
            <person name="Novella S."/>
            <person name="de Pablos B."/>
            <person name="Perez-Diaz J.-C."/>
            <person name="Purcell R."/>
            <person name="Remmel B."/>
            <person name="Rose M."/>
            <person name="Schlueter T."/>
            <person name="Simoes N."/>
            <person name="Tierrez A."/>
            <person name="Vazquez-Boland J.-A."/>
            <person name="Voss H."/>
            <person name="Wehland J."/>
            <person name="Cossart P."/>
        </authorList>
    </citation>
    <scope>NUCLEOTIDE SEQUENCE [LARGE SCALE GENOMIC DNA]</scope>
    <source>
        <strain>ATCC BAA-680 / CLIP 11262</strain>
    </source>
</reference>